<sequence length="241" mass="26064">MIILSTNDNLTNPYEIARYIKEAKKSTPVRAYIQGNIEIEETEELEVYGCDNFKIVFGELEVVEKLLEINKDKIKHYRLEYDRRNSAIPLLDIKHLDARIEPGAIIRDKVKIGKNAVIMMGAVINIGAEIGENSMIDMNAVIGARGIIGKNVHVGAGAVIAGVLEPPSSVPVVLEDNVLVGANAVILEGVRVGHGAVVAAGSVVTEDVPPNTVVAGVPAKIVKIVDDKTREKTKLMEDLRG</sequence>
<proteinExistence type="inferred from homology"/>
<accession>B0KAL9</accession>
<evidence type="ECO:0000255" key="1">
    <source>
        <dbReference type="HAMAP-Rule" id="MF_01691"/>
    </source>
</evidence>
<organism>
    <name type="scientific">Thermoanaerobacter pseudethanolicus (strain ATCC 33223 / 39E)</name>
    <name type="common">Clostridium thermohydrosulfuricum</name>
    <dbReference type="NCBI Taxonomy" id="340099"/>
    <lineage>
        <taxon>Bacteria</taxon>
        <taxon>Bacillati</taxon>
        <taxon>Bacillota</taxon>
        <taxon>Clostridia</taxon>
        <taxon>Thermoanaerobacterales</taxon>
        <taxon>Thermoanaerobacteraceae</taxon>
        <taxon>Thermoanaerobacter</taxon>
    </lineage>
</organism>
<name>DAPH_THEP3</name>
<reference key="1">
    <citation type="submission" date="2008-01" db="EMBL/GenBank/DDBJ databases">
        <title>Complete sequence of Thermoanaerobacter pseudethanolicus 39E.</title>
        <authorList>
            <person name="Copeland A."/>
            <person name="Lucas S."/>
            <person name="Lapidus A."/>
            <person name="Barry K."/>
            <person name="Glavina del Rio T."/>
            <person name="Dalin E."/>
            <person name="Tice H."/>
            <person name="Pitluck S."/>
            <person name="Bruce D."/>
            <person name="Goodwin L."/>
            <person name="Saunders E."/>
            <person name="Brettin T."/>
            <person name="Detter J.C."/>
            <person name="Han C."/>
            <person name="Schmutz J."/>
            <person name="Larimer F."/>
            <person name="Land M."/>
            <person name="Hauser L."/>
            <person name="Kyrpides N."/>
            <person name="Lykidis A."/>
            <person name="Hemme C."/>
            <person name="Fields M.W."/>
            <person name="He Z."/>
            <person name="Zhou J."/>
            <person name="Richardson P."/>
        </authorList>
    </citation>
    <scope>NUCLEOTIDE SEQUENCE [LARGE SCALE GENOMIC DNA]</scope>
    <source>
        <strain>ATCC 33223 / DSM 2355 / 39E</strain>
    </source>
</reference>
<feature type="chain" id="PRO_0000376723" description="2,3,4,5-tetrahydropyridine-2,6-dicarboxylate N-acetyltransferase">
    <location>
        <begin position="1"/>
        <end position="241"/>
    </location>
</feature>
<dbReference type="EC" id="2.3.1.89" evidence="1"/>
<dbReference type="EMBL" id="CP000924">
    <property type="protein sequence ID" value="ABY95153.1"/>
    <property type="molecule type" value="Genomic_DNA"/>
</dbReference>
<dbReference type="SMR" id="B0KAL9"/>
<dbReference type="STRING" id="340099.Teth39_1504"/>
<dbReference type="KEGG" id="tpd:Teth39_1504"/>
<dbReference type="eggNOG" id="COG2171">
    <property type="taxonomic scope" value="Bacteria"/>
</dbReference>
<dbReference type="HOGENOM" id="CLU_103751_0_0_9"/>
<dbReference type="UniPathway" id="UPA00034">
    <property type="reaction ID" value="UER00022"/>
</dbReference>
<dbReference type="Proteomes" id="UP000002156">
    <property type="component" value="Chromosome"/>
</dbReference>
<dbReference type="GO" id="GO:0047200">
    <property type="term" value="F:tetrahydrodipicolinate N-acetyltransferase activity"/>
    <property type="evidence" value="ECO:0007669"/>
    <property type="project" value="UniProtKB-EC"/>
</dbReference>
<dbReference type="GO" id="GO:0019877">
    <property type="term" value="P:diaminopimelate biosynthetic process"/>
    <property type="evidence" value="ECO:0007669"/>
    <property type="project" value="UniProtKB-UniRule"/>
</dbReference>
<dbReference type="GO" id="GO:0009089">
    <property type="term" value="P:lysine biosynthetic process via diaminopimelate"/>
    <property type="evidence" value="ECO:0007669"/>
    <property type="project" value="UniProtKB-UniRule"/>
</dbReference>
<dbReference type="CDD" id="cd03350">
    <property type="entry name" value="LbH_THP_succinylT"/>
    <property type="match status" value="1"/>
</dbReference>
<dbReference type="Gene3D" id="2.160.10.10">
    <property type="entry name" value="Hexapeptide repeat proteins"/>
    <property type="match status" value="1"/>
</dbReference>
<dbReference type="Gene3D" id="3.30.70.250">
    <property type="entry name" value="Malonyl-CoA ACP transacylase, ACP-binding"/>
    <property type="match status" value="1"/>
</dbReference>
<dbReference type="HAMAP" id="MF_01691">
    <property type="entry name" value="DapH"/>
    <property type="match status" value="1"/>
</dbReference>
<dbReference type="InterPro" id="IPR019873">
    <property type="entry name" value="DapH"/>
</dbReference>
<dbReference type="InterPro" id="IPR013710">
    <property type="entry name" value="DapH_N"/>
</dbReference>
<dbReference type="InterPro" id="IPR001451">
    <property type="entry name" value="Hexapep"/>
</dbReference>
<dbReference type="InterPro" id="IPR018357">
    <property type="entry name" value="Hexapep_transf_CS"/>
</dbReference>
<dbReference type="InterPro" id="IPR050179">
    <property type="entry name" value="Trans_hexapeptide_repeat"/>
</dbReference>
<dbReference type="InterPro" id="IPR011004">
    <property type="entry name" value="Trimer_LpxA-like_sf"/>
</dbReference>
<dbReference type="NCBIfam" id="TIGR03532">
    <property type="entry name" value="DapD_Ac"/>
    <property type="match status" value="1"/>
</dbReference>
<dbReference type="PANTHER" id="PTHR43300:SF10">
    <property type="entry name" value="2,3,4,5-TETRAHYDROPYRIDINE-2,6-DICARBOXYLATE N-ACETYLTRANSFERASE"/>
    <property type="match status" value="1"/>
</dbReference>
<dbReference type="PANTHER" id="PTHR43300">
    <property type="entry name" value="ACETYLTRANSFERASE"/>
    <property type="match status" value="1"/>
</dbReference>
<dbReference type="Pfam" id="PF08503">
    <property type="entry name" value="DapH_N"/>
    <property type="match status" value="1"/>
</dbReference>
<dbReference type="Pfam" id="PF00132">
    <property type="entry name" value="Hexapep"/>
    <property type="match status" value="1"/>
</dbReference>
<dbReference type="Pfam" id="PF14602">
    <property type="entry name" value="Hexapep_2"/>
    <property type="match status" value="1"/>
</dbReference>
<dbReference type="SUPFAM" id="SSF51161">
    <property type="entry name" value="Trimeric LpxA-like enzymes"/>
    <property type="match status" value="1"/>
</dbReference>
<dbReference type="PROSITE" id="PS00101">
    <property type="entry name" value="HEXAPEP_TRANSFERASES"/>
    <property type="match status" value="1"/>
</dbReference>
<keyword id="KW-0012">Acyltransferase</keyword>
<keyword id="KW-0028">Amino-acid biosynthesis</keyword>
<keyword id="KW-0220">Diaminopimelate biosynthesis</keyword>
<keyword id="KW-0457">Lysine biosynthesis</keyword>
<keyword id="KW-1185">Reference proteome</keyword>
<keyword id="KW-0677">Repeat</keyword>
<keyword id="KW-0808">Transferase</keyword>
<protein>
    <recommendedName>
        <fullName evidence="1">2,3,4,5-tetrahydropyridine-2,6-dicarboxylate N-acetyltransferase</fullName>
        <ecNumber evidence="1">2.3.1.89</ecNumber>
    </recommendedName>
    <alternativeName>
        <fullName evidence="1">Tetrahydrodipicolinate N-acetyltransferase</fullName>
        <shortName evidence="1">THP acetyltransferase</shortName>
        <shortName evidence="1">Tetrahydropicolinate acetylase</shortName>
    </alternativeName>
</protein>
<gene>
    <name evidence="1" type="primary">dapH</name>
    <name type="ordered locus">Teth39_1504</name>
</gene>
<comment type="function">
    <text evidence="1">Catalyzes the transfer of an acetyl group from acetyl-CoA to tetrahydrodipicolinate.</text>
</comment>
<comment type="catalytic activity">
    <reaction evidence="1">
        <text>(S)-2,3,4,5-tetrahydrodipicolinate + acetyl-CoA + H2O = L-2-acetamido-6-oxoheptanedioate + CoA</text>
        <dbReference type="Rhea" id="RHEA:13085"/>
        <dbReference type="ChEBI" id="CHEBI:15377"/>
        <dbReference type="ChEBI" id="CHEBI:16845"/>
        <dbReference type="ChEBI" id="CHEBI:57287"/>
        <dbReference type="ChEBI" id="CHEBI:57288"/>
        <dbReference type="ChEBI" id="CHEBI:58117"/>
        <dbReference type="EC" id="2.3.1.89"/>
    </reaction>
</comment>
<comment type="pathway">
    <text evidence="1">Amino-acid biosynthesis; L-lysine biosynthesis via DAP pathway; LL-2,6-diaminopimelate from (S)-tetrahydrodipicolinate (acetylase route): step 1/3.</text>
</comment>
<comment type="similarity">
    <text evidence="1">Belongs to the transferase hexapeptide repeat family. DapH subfamily.</text>
</comment>